<keyword id="KW-0067">ATP-binding</keyword>
<keyword id="KW-0963">Cytoplasm</keyword>
<keyword id="KW-0547">Nucleotide-binding</keyword>
<keyword id="KW-0548">Nucleotidyltransferase</keyword>
<keyword id="KW-1185">Reference proteome</keyword>
<keyword id="KW-0808">Transferase</keyword>
<keyword id="KW-0819">tRNA processing</keyword>
<protein>
    <recommendedName>
        <fullName evidence="1">Threonylcarbamoyl-AMP synthase</fullName>
        <shortName evidence="1">TC-AMP synthase</shortName>
        <ecNumber evidence="1">2.7.7.87</ecNumber>
    </recommendedName>
    <alternativeName>
        <fullName evidence="1">L-threonylcarbamoyladenylate synthase</fullName>
    </alternativeName>
    <alternativeName>
        <fullName evidence="1">t(6)A37 threonylcarbamoyladenosine biosynthesis protein TsaC</fullName>
    </alternativeName>
    <alternativeName>
        <fullName evidence="1">tRNA threonylcarbamoyladenosine biosynthesis protein TsaC</fullName>
    </alternativeName>
</protein>
<comment type="function">
    <text evidence="1">Required for the formation of a threonylcarbamoyl group on adenosine at position 37 (t(6)A37) in tRNAs that read codons beginning with adenine. Catalyzes the conversion of L-threonine, HCO(3)(-)/CO(2) and ATP to give threonylcarbamoyl-AMP (TC-AMP) as the acyladenylate intermediate, with the release of diphosphate.</text>
</comment>
<comment type="catalytic activity">
    <reaction evidence="1">
        <text>L-threonine + hydrogencarbonate + ATP = L-threonylcarbamoyladenylate + diphosphate + H2O</text>
        <dbReference type="Rhea" id="RHEA:36407"/>
        <dbReference type="ChEBI" id="CHEBI:15377"/>
        <dbReference type="ChEBI" id="CHEBI:17544"/>
        <dbReference type="ChEBI" id="CHEBI:30616"/>
        <dbReference type="ChEBI" id="CHEBI:33019"/>
        <dbReference type="ChEBI" id="CHEBI:57926"/>
        <dbReference type="ChEBI" id="CHEBI:73682"/>
        <dbReference type="EC" id="2.7.7.87"/>
    </reaction>
</comment>
<comment type="subcellular location">
    <subcellularLocation>
        <location evidence="1">Cytoplasm</location>
    </subcellularLocation>
</comment>
<comment type="similarity">
    <text evidence="1">Belongs to the SUA5 family. TsaC subfamily.</text>
</comment>
<evidence type="ECO:0000255" key="1">
    <source>
        <dbReference type="HAMAP-Rule" id="MF_01852"/>
    </source>
</evidence>
<gene>
    <name evidence="1" type="primary">tsaC</name>
    <name type="synonym">rimN</name>
    <name type="ordered locus">SDY_3459</name>
</gene>
<feature type="chain" id="PRO_0000352993" description="Threonylcarbamoyl-AMP synthase">
    <location>
        <begin position="1"/>
        <end position="190"/>
    </location>
</feature>
<feature type="domain" description="YrdC-like" evidence="1">
    <location>
        <begin position="7"/>
        <end position="190"/>
    </location>
</feature>
<dbReference type="EC" id="2.7.7.87" evidence="1"/>
<dbReference type="EMBL" id="CP000034">
    <property type="protein sequence ID" value="ABB63438.1"/>
    <property type="molecule type" value="Genomic_DNA"/>
</dbReference>
<dbReference type="RefSeq" id="WP_011378872.1">
    <property type="nucleotide sequence ID" value="NC_007606.1"/>
</dbReference>
<dbReference type="RefSeq" id="YP_404929.1">
    <property type="nucleotide sequence ID" value="NC_007606.1"/>
</dbReference>
<dbReference type="SMR" id="Q32B67"/>
<dbReference type="STRING" id="300267.SDY_3459"/>
<dbReference type="EnsemblBacteria" id="ABB63438">
    <property type="protein sequence ID" value="ABB63438"/>
    <property type="gene ID" value="SDY_3459"/>
</dbReference>
<dbReference type="KEGG" id="sdy:SDY_3459"/>
<dbReference type="PATRIC" id="fig|300267.13.peg.4112"/>
<dbReference type="HOGENOM" id="CLU_031397_6_0_6"/>
<dbReference type="Proteomes" id="UP000002716">
    <property type="component" value="Chromosome"/>
</dbReference>
<dbReference type="GO" id="GO:0005737">
    <property type="term" value="C:cytoplasm"/>
    <property type="evidence" value="ECO:0007669"/>
    <property type="project" value="UniProtKB-SubCell"/>
</dbReference>
<dbReference type="GO" id="GO:0005524">
    <property type="term" value="F:ATP binding"/>
    <property type="evidence" value="ECO:0007669"/>
    <property type="project" value="UniProtKB-UniRule"/>
</dbReference>
<dbReference type="GO" id="GO:0003725">
    <property type="term" value="F:double-stranded RNA binding"/>
    <property type="evidence" value="ECO:0007669"/>
    <property type="project" value="InterPro"/>
</dbReference>
<dbReference type="GO" id="GO:0061710">
    <property type="term" value="F:L-threonylcarbamoyladenylate synthase"/>
    <property type="evidence" value="ECO:0007669"/>
    <property type="project" value="UniProtKB-EC"/>
</dbReference>
<dbReference type="GO" id="GO:0000049">
    <property type="term" value="F:tRNA binding"/>
    <property type="evidence" value="ECO:0007669"/>
    <property type="project" value="TreeGrafter"/>
</dbReference>
<dbReference type="GO" id="GO:0006450">
    <property type="term" value="P:regulation of translational fidelity"/>
    <property type="evidence" value="ECO:0007669"/>
    <property type="project" value="TreeGrafter"/>
</dbReference>
<dbReference type="GO" id="GO:0002949">
    <property type="term" value="P:tRNA threonylcarbamoyladenosine modification"/>
    <property type="evidence" value="ECO:0007669"/>
    <property type="project" value="UniProtKB-UniRule"/>
</dbReference>
<dbReference type="FunFam" id="3.90.870.10:FF:000004">
    <property type="entry name" value="Threonylcarbamoyl-AMP synthase"/>
    <property type="match status" value="1"/>
</dbReference>
<dbReference type="Gene3D" id="3.90.870.10">
    <property type="entry name" value="DHBP synthase"/>
    <property type="match status" value="1"/>
</dbReference>
<dbReference type="HAMAP" id="MF_01852">
    <property type="entry name" value="TsaC"/>
    <property type="match status" value="1"/>
</dbReference>
<dbReference type="InterPro" id="IPR017945">
    <property type="entry name" value="DHBP_synth_RibB-like_a/b_dom"/>
</dbReference>
<dbReference type="InterPro" id="IPR006070">
    <property type="entry name" value="Sua5-like_dom"/>
</dbReference>
<dbReference type="InterPro" id="IPR023535">
    <property type="entry name" value="TC-AMP_synthase"/>
</dbReference>
<dbReference type="InterPro" id="IPR050156">
    <property type="entry name" value="TC-AMP_synthase_SUA5"/>
</dbReference>
<dbReference type="NCBIfam" id="NF007919">
    <property type="entry name" value="PRK10634.1"/>
    <property type="match status" value="1"/>
</dbReference>
<dbReference type="PANTHER" id="PTHR17490">
    <property type="entry name" value="SUA5"/>
    <property type="match status" value="1"/>
</dbReference>
<dbReference type="PANTHER" id="PTHR17490:SF18">
    <property type="entry name" value="THREONYLCARBAMOYL-AMP SYNTHASE"/>
    <property type="match status" value="1"/>
</dbReference>
<dbReference type="Pfam" id="PF01300">
    <property type="entry name" value="Sua5_yciO_yrdC"/>
    <property type="match status" value="1"/>
</dbReference>
<dbReference type="SUPFAM" id="SSF55821">
    <property type="entry name" value="YrdC/RibB"/>
    <property type="match status" value="1"/>
</dbReference>
<dbReference type="PROSITE" id="PS51163">
    <property type="entry name" value="YRDC"/>
    <property type="match status" value="1"/>
</dbReference>
<organism>
    <name type="scientific">Shigella dysenteriae serotype 1 (strain Sd197)</name>
    <dbReference type="NCBI Taxonomy" id="300267"/>
    <lineage>
        <taxon>Bacteria</taxon>
        <taxon>Pseudomonadati</taxon>
        <taxon>Pseudomonadota</taxon>
        <taxon>Gammaproteobacteria</taxon>
        <taxon>Enterobacterales</taxon>
        <taxon>Enterobacteriaceae</taxon>
        <taxon>Shigella</taxon>
    </lineage>
</organism>
<reference key="1">
    <citation type="journal article" date="2005" name="Nucleic Acids Res.">
        <title>Genome dynamics and diversity of Shigella species, the etiologic agents of bacillary dysentery.</title>
        <authorList>
            <person name="Yang F."/>
            <person name="Yang J."/>
            <person name="Zhang X."/>
            <person name="Chen L."/>
            <person name="Jiang Y."/>
            <person name="Yan Y."/>
            <person name="Tang X."/>
            <person name="Wang J."/>
            <person name="Xiong Z."/>
            <person name="Dong J."/>
            <person name="Xue Y."/>
            <person name="Zhu Y."/>
            <person name="Xu X."/>
            <person name="Sun L."/>
            <person name="Chen S."/>
            <person name="Nie H."/>
            <person name="Peng J."/>
            <person name="Xu J."/>
            <person name="Wang Y."/>
            <person name="Yuan Z."/>
            <person name="Wen Y."/>
            <person name="Yao Z."/>
            <person name="Shen Y."/>
            <person name="Qiang B."/>
            <person name="Hou Y."/>
            <person name="Yu J."/>
            <person name="Jin Q."/>
        </authorList>
    </citation>
    <scope>NUCLEOTIDE SEQUENCE [LARGE SCALE GENOMIC DNA]</scope>
    <source>
        <strain>Sd197</strain>
    </source>
</reference>
<name>TSAC_SHIDS</name>
<accession>Q32B67</accession>
<proteinExistence type="inferred from homology"/>
<sequence length="190" mass="20626">MNNNLQGDAIAAAIDVLNEERVIAYPTEAVFGVGCDPDSETAVMRLLELKLRPVDKGLILIAANYEQLKPYIDDTMLTDAQRETIFSRWPGPVTFVFPAPATTPRWLTGRFDSLAVRVTDHPLVVALCQAYGKPLVSTSANLSGLPPCRTVDEVRAQFGAAFPVVPGETGGRLNPSEIRDALTGELFRQG</sequence>